<protein>
    <recommendedName>
        <fullName evidence="1">Phosphopantetheine adenylyltransferase</fullName>
        <ecNumber evidence="1">2.7.7.3</ecNumber>
    </recommendedName>
    <alternativeName>
        <fullName evidence="1">Dephospho-CoA pyrophosphorylase</fullName>
    </alternativeName>
    <alternativeName>
        <fullName evidence="1">Pantetheine-phosphate adenylyltransferase</fullName>
        <shortName evidence="1">PPAT</shortName>
    </alternativeName>
</protein>
<evidence type="ECO:0000255" key="1">
    <source>
        <dbReference type="HAMAP-Rule" id="MF_00151"/>
    </source>
</evidence>
<feature type="chain" id="PRO_0000156210" description="Phosphopantetheine adenylyltransferase">
    <location>
        <begin position="1"/>
        <end position="163"/>
    </location>
</feature>
<feature type="binding site" evidence="1">
    <location>
        <begin position="9"/>
        <end position="10"/>
    </location>
    <ligand>
        <name>ATP</name>
        <dbReference type="ChEBI" id="CHEBI:30616"/>
    </ligand>
</feature>
<feature type="binding site" evidence="1">
    <location>
        <position position="9"/>
    </location>
    <ligand>
        <name>substrate</name>
    </ligand>
</feature>
<feature type="binding site" evidence="1">
    <location>
        <position position="17"/>
    </location>
    <ligand>
        <name>ATP</name>
        <dbReference type="ChEBI" id="CHEBI:30616"/>
    </ligand>
</feature>
<feature type="binding site" evidence="1">
    <location>
        <position position="41"/>
    </location>
    <ligand>
        <name>substrate</name>
    </ligand>
</feature>
<feature type="binding site" evidence="1">
    <location>
        <position position="73"/>
    </location>
    <ligand>
        <name>substrate</name>
    </ligand>
</feature>
<feature type="binding site" evidence="1">
    <location>
        <position position="87"/>
    </location>
    <ligand>
        <name>substrate</name>
    </ligand>
</feature>
<feature type="binding site" evidence="1">
    <location>
        <begin position="88"/>
        <end position="90"/>
    </location>
    <ligand>
        <name>ATP</name>
        <dbReference type="ChEBI" id="CHEBI:30616"/>
    </ligand>
</feature>
<feature type="binding site" evidence="1">
    <location>
        <position position="98"/>
    </location>
    <ligand>
        <name>ATP</name>
        <dbReference type="ChEBI" id="CHEBI:30616"/>
    </ligand>
</feature>
<feature type="binding site" evidence="1">
    <location>
        <begin position="124"/>
        <end position="130"/>
    </location>
    <ligand>
        <name>ATP</name>
        <dbReference type="ChEBI" id="CHEBI:30616"/>
    </ligand>
</feature>
<feature type="site" description="Transition state stabilizer" evidence="1">
    <location>
        <position position="17"/>
    </location>
</feature>
<comment type="function">
    <text evidence="1">Reversibly transfers an adenylyl group from ATP to 4'-phosphopantetheine, yielding dephospho-CoA (dPCoA) and pyrophosphate.</text>
</comment>
<comment type="catalytic activity">
    <reaction evidence="1">
        <text>(R)-4'-phosphopantetheine + ATP + H(+) = 3'-dephospho-CoA + diphosphate</text>
        <dbReference type="Rhea" id="RHEA:19801"/>
        <dbReference type="ChEBI" id="CHEBI:15378"/>
        <dbReference type="ChEBI" id="CHEBI:30616"/>
        <dbReference type="ChEBI" id="CHEBI:33019"/>
        <dbReference type="ChEBI" id="CHEBI:57328"/>
        <dbReference type="ChEBI" id="CHEBI:61723"/>
        <dbReference type="EC" id="2.7.7.3"/>
    </reaction>
</comment>
<comment type="cofactor">
    <cofactor evidence="1">
        <name>Mg(2+)</name>
        <dbReference type="ChEBI" id="CHEBI:18420"/>
    </cofactor>
</comment>
<comment type="pathway">
    <text evidence="1">Cofactor biosynthesis; coenzyme A biosynthesis; CoA from (R)-pantothenate: step 4/5.</text>
</comment>
<comment type="subunit">
    <text evidence="1">Homohexamer.</text>
</comment>
<comment type="subcellular location">
    <subcellularLocation>
        <location evidence="1">Cytoplasm</location>
    </subcellularLocation>
</comment>
<comment type="similarity">
    <text evidence="1">Belongs to the bacterial CoaD family.</text>
</comment>
<name>COAD_FUSNN</name>
<accession>Q8RGX1</accession>
<reference key="1">
    <citation type="journal article" date="2002" name="J. Bacteriol.">
        <title>Genome sequence and analysis of the oral bacterium Fusobacterium nucleatum strain ATCC 25586.</title>
        <authorList>
            <person name="Kapatral V."/>
            <person name="Anderson I."/>
            <person name="Ivanova N."/>
            <person name="Reznik G."/>
            <person name="Los T."/>
            <person name="Lykidis A."/>
            <person name="Bhattacharyya A."/>
            <person name="Bartman A."/>
            <person name="Gardner W."/>
            <person name="Grechkin G."/>
            <person name="Zhu L."/>
            <person name="Vasieva O."/>
            <person name="Chu L."/>
            <person name="Kogan Y."/>
            <person name="Chaga O."/>
            <person name="Goltsman E."/>
            <person name="Bernal A."/>
            <person name="Larsen N."/>
            <person name="D'Souza M."/>
            <person name="Walunas T."/>
            <person name="Pusch G."/>
            <person name="Haselkorn R."/>
            <person name="Fonstein M."/>
            <person name="Kyrpides N.C."/>
            <person name="Overbeek R."/>
        </authorList>
    </citation>
    <scope>NUCLEOTIDE SEQUENCE [LARGE SCALE GENOMIC DNA]</scope>
    <source>
        <strain>ATCC 25586 / DSM 15643 / BCRC 10681 / CIP 101130 / JCM 8532 / KCTC 2640 / LMG 13131 / VPI 4355</strain>
    </source>
</reference>
<proteinExistence type="inferred from homology"/>
<sequence length="163" mass="18594">MKIGVYAGSFDPITKGHQDIIERALKIVDKLIVVVMNNPTKNYWFNLDERKNLISKIFEGSDSIKVDEHAGLLVDFMAKNSCNILIKGLRDVKDFSEEMTYSFANKKLSNGEVDTIFIPTSEKYTYVSSTFVKELAFYNQSLTGYVDDKVIVDILNRAKEYRG</sequence>
<organism>
    <name type="scientific">Fusobacterium nucleatum subsp. nucleatum (strain ATCC 25586 / DSM 15643 / BCRC 10681 / CIP 101130 / JCM 8532 / KCTC 2640 / LMG 13131 / VPI 4355)</name>
    <dbReference type="NCBI Taxonomy" id="190304"/>
    <lineage>
        <taxon>Bacteria</taxon>
        <taxon>Fusobacteriati</taxon>
        <taxon>Fusobacteriota</taxon>
        <taxon>Fusobacteriia</taxon>
        <taxon>Fusobacteriales</taxon>
        <taxon>Fusobacteriaceae</taxon>
        <taxon>Fusobacterium</taxon>
    </lineage>
</organism>
<gene>
    <name evidence="1" type="primary">coaD</name>
    <name type="ordered locus">FN0156</name>
</gene>
<dbReference type="EC" id="2.7.7.3" evidence="1"/>
<dbReference type="EMBL" id="AE009951">
    <property type="protein sequence ID" value="AAL94362.1"/>
    <property type="molecule type" value="Genomic_DNA"/>
</dbReference>
<dbReference type="RefSeq" id="NP_603063.1">
    <property type="nucleotide sequence ID" value="NC_003454.1"/>
</dbReference>
<dbReference type="RefSeq" id="WP_011016187.1">
    <property type="nucleotide sequence ID" value="NZ_OZ209243.1"/>
</dbReference>
<dbReference type="SMR" id="Q8RGX1"/>
<dbReference type="FunCoup" id="Q8RGX1">
    <property type="interactions" value="356"/>
</dbReference>
<dbReference type="STRING" id="190304.FN0156"/>
<dbReference type="PaxDb" id="190304-FN0156"/>
<dbReference type="EnsemblBacteria" id="AAL94362">
    <property type="protein sequence ID" value="AAL94362"/>
    <property type="gene ID" value="FN0156"/>
</dbReference>
<dbReference type="GeneID" id="79799083"/>
<dbReference type="KEGG" id="fnu:FN0156"/>
<dbReference type="PATRIC" id="fig|190304.8.peg.736"/>
<dbReference type="eggNOG" id="COG0669">
    <property type="taxonomic scope" value="Bacteria"/>
</dbReference>
<dbReference type="HOGENOM" id="CLU_100149_0_1_0"/>
<dbReference type="InParanoid" id="Q8RGX1"/>
<dbReference type="BioCyc" id="FNUC190304:G1FZS-759-MONOMER"/>
<dbReference type="UniPathway" id="UPA00241">
    <property type="reaction ID" value="UER00355"/>
</dbReference>
<dbReference type="Proteomes" id="UP000002521">
    <property type="component" value="Chromosome"/>
</dbReference>
<dbReference type="GO" id="GO:0005737">
    <property type="term" value="C:cytoplasm"/>
    <property type="evidence" value="ECO:0007669"/>
    <property type="project" value="UniProtKB-SubCell"/>
</dbReference>
<dbReference type="GO" id="GO:0005524">
    <property type="term" value="F:ATP binding"/>
    <property type="evidence" value="ECO:0007669"/>
    <property type="project" value="UniProtKB-KW"/>
</dbReference>
<dbReference type="GO" id="GO:0004595">
    <property type="term" value="F:pantetheine-phosphate adenylyltransferase activity"/>
    <property type="evidence" value="ECO:0000318"/>
    <property type="project" value="GO_Central"/>
</dbReference>
<dbReference type="GO" id="GO:0015937">
    <property type="term" value="P:coenzyme A biosynthetic process"/>
    <property type="evidence" value="ECO:0000318"/>
    <property type="project" value="GO_Central"/>
</dbReference>
<dbReference type="CDD" id="cd02163">
    <property type="entry name" value="PPAT"/>
    <property type="match status" value="1"/>
</dbReference>
<dbReference type="Gene3D" id="3.40.50.620">
    <property type="entry name" value="HUPs"/>
    <property type="match status" value="1"/>
</dbReference>
<dbReference type="HAMAP" id="MF_00151">
    <property type="entry name" value="PPAT_bact"/>
    <property type="match status" value="1"/>
</dbReference>
<dbReference type="InterPro" id="IPR004821">
    <property type="entry name" value="Cyt_trans-like"/>
</dbReference>
<dbReference type="InterPro" id="IPR001980">
    <property type="entry name" value="PPAT"/>
</dbReference>
<dbReference type="InterPro" id="IPR014729">
    <property type="entry name" value="Rossmann-like_a/b/a_fold"/>
</dbReference>
<dbReference type="NCBIfam" id="TIGR01510">
    <property type="entry name" value="coaD_prev_kdtB"/>
    <property type="match status" value="1"/>
</dbReference>
<dbReference type="NCBIfam" id="TIGR00125">
    <property type="entry name" value="cyt_tran_rel"/>
    <property type="match status" value="1"/>
</dbReference>
<dbReference type="PANTHER" id="PTHR21342">
    <property type="entry name" value="PHOSPHOPANTETHEINE ADENYLYLTRANSFERASE"/>
    <property type="match status" value="1"/>
</dbReference>
<dbReference type="PANTHER" id="PTHR21342:SF1">
    <property type="entry name" value="PHOSPHOPANTETHEINE ADENYLYLTRANSFERASE"/>
    <property type="match status" value="1"/>
</dbReference>
<dbReference type="Pfam" id="PF01467">
    <property type="entry name" value="CTP_transf_like"/>
    <property type="match status" value="1"/>
</dbReference>
<dbReference type="PRINTS" id="PR01020">
    <property type="entry name" value="LPSBIOSNTHSS"/>
</dbReference>
<dbReference type="SUPFAM" id="SSF52374">
    <property type="entry name" value="Nucleotidylyl transferase"/>
    <property type="match status" value="1"/>
</dbReference>
<keyword id="KW-0067">ATP-binding</keyword>
<keyword id="KW-0173">Coenzyme A biosynthesis</keyword>
<keyword id="KW-0963">Cytoplasm</keyword>
<keyword id="KW-0460">Magnesium</keyword>
<keyword id="KW-0547">Nucleotide-binding</keyword>
<keyword id="KW-0548">Nucleotidyltransferase</keyword>
<keyword id="KW-1185">Reference proteome</keyword>
<keyword id="KW-0808">Transferase</keyword>